<name>SYP_XANAC</name>
<dbReference type="EC" id="6.1.1.15" evidence="1"/>
<dbReference type="EMBL" id="AE008923">
    <property type="protein sequence ID" value="AAM38410.1"/>
    <property type="status" value="ALT_INIT"/>
    <property type="molecule type" value="Genomic_DNA"/>
</dbReference>
<dbReference type="RefSeq" id="WP_003491014.1">
    <property type="nucleotide sequence ID" value="NC_003919.1"/>
</dbReference>
<dbReference type="SMR" id="Q8PGP9"/>
<dbReference type="KEGG" id="xac:XAC3567"/>
<dbReference type="eggNOG" id="COG0442">
    <property type="taxonomic scope" value="Bacteria"/>
</dbReference>
<dbReference type="HOGENOM" id="CLU_016739_0_0_6"/>
<dbReference type="Proteomes" id="UP000000576">
    <property type="component" value="Chromosome"/>
</dbReference>
<dbReference type="GO" id="GO:0005829">
    <property type="term" value="C:cytosol"/>
    <property type="evidence" value="ECO:0007669"/>
    <property type="project" value="TreeGrafter"/>
</dbReference>
<dbReference type="GO" id="GO:0002161">
    <property type="term" value="F:aminoacyl-tRNA deacylase activity"/>
    <property type="evidence" value="ECO:0007669"/>
    <property type="project" value="InterPro"/>
</dbReference>
<dbReference type="GO" id="GO:0005524">
    <property type="term" value="F:ATP binding"/>
    <property type="evidence" value="ECO:0007669"/>
    <property type="project" value="UniProtKB-UniRule"/>
</dbReference>
<dbReference type="GO" id="GO:0004827">
    <property type="term" value="F:proline-tRNA ligase activity"/>
    <property type="evidence" value="ECO:0007669"/>
    <property type="project" value="UniProtKB-UniRule"/>
</dbReference>
<dbReference type="GO" id="GO:0006433">
    <property type="term" value="P:prolyl-tRNA aminoacylation"/>
    <property type="evidence" value="ECO:0007669"/>
    <property type="project" value="UniProtKB-UniRule"/>
</dbReference>
<dbReference type="CDD" id="cd04334">
    <property type="entry name" value="ProRS-INS"/>
    <property type="match status" value="1"/>
</dbReference>
<dbReference type="CDD" id="cd00779">
    <property type="entry name" value="ProRS_core_prok"/>
    <property type="match status" value="1"/>
</dbReference>
<dbReference type="FunFam" id="3.30.930.10:FF:000012">
    <property type="entry name" value="Proline--tRNA ligase"/>
    <property type="match status" value="1"/>
</dbReference>
<dbReference type="Gene3D" id="3.40.50.800">
    <property type="entry name" value="Anticodon-binding domain"/>
    <property type="match status" value="1"/>
</dbReference>
<dbReference type="Gene3D" id="3.30.930.10">
    <property type="entry name" value="Bira Bifunctional Protein, Domain 2"/>
    <property type="match status" value="2"/>
</dbReference>
<dbReference type="Gene3D" id="3.90.960.10">
    <property type="entry name" value="YbaK/aminoacyl-tRNA synthetase-associated domain"/>
    <property type="match status" value="1"/>
</dbReference>
<dbReference type="HAMAP" id="MF_01569">
    <property type="entry name" value="Pro_tRNA_synth_type1"/>
    <property type="match status" value="1"/>
</dbReference>
<dbReference type="InterPro" id="IPR002314">
    <property type="entry name" value="aa-tRNA-synt_IIb"/>
</dbReference>
<dbReference type="InterPro" id="IPR006195">
    <property type="entry name" value="aa-tRNA-synth_II"/>
</dbReference>
<dbReference type="InterPro" id="IPR045864">
    <property type="entry name" value="aa-tRNA-synth_II/BPL/LPL"/>
</dbReference>
<dbReference type="InterPro" id="IPR004154">
    <property type="entry name" value="Anticodon-bd"/>
</dbReference>
<dbReference type="InterPro" id="IPR036621">
    <property type="entry name" value="Anticodon-bd_dom_sf"/>
</dbReference>
<dbReference type="InterPro" id="IPR002316">
    <property type="entry name" value="Pro-tRNA-ligase_IIa"/>
</dbReference>
<dbReference type="InterPro" id="IPR004500">
    <property type="entry name" value="Pro-tRNA-synth_IIa_bac-type"/>
</dbReference>
<dbReference type="InterPro" id="IPR023717">
    <property type="entry name" value="Pro-tRNA-Synthase_IIa_type1"/>
</dbReference>
<dbReference type="InterPro" id="IPR050062">
    <property type="entry name" value="Pro-tRNA_synthetase"/>
</dbReference>
<dbReference type="InterPro" id="IPR033730">
    <property type="entry name" value="ProRS_core_prok"/>
</dbReference>
<dbReference type="InterPro" id="IPR036754">
    <property type="entry name" value="YbaK/aa-tRNA-synt-asso_dom_sf"/>
</dbReference>
<dbReference type="InterPro" id="IPR007214">
    <property type="entry name" value="YbaK/aa-tRNA-synth-assoc-dom"/>
</dbReference>
<dbReference type="NCBIfam" id="NF006625">
    <property type="entry name" value="PRK09194.1"/>
    <property type="match status" value="1"/>
</dbReference>
<dbReference type="NCBIfam" id="TIGR00409">
    <property type="entry name" value="proS_fam_II"/>
    <property type="match status" value="1"/>
</dbReference>
<dbReference type="PANTHER" id="PTHR42753">
    <property type="entry name" value="MITOCHONDRIAL RIBOSOME PROTEIN L39/PROLYL-TRNA LIGASE FAMILY MEMBER"/>
    <property type="match status" value="1"/>
</dbReference>
<dbReference type="PANTHER" id="PTHR42753:SF2">
    <property type="entry name" value="PROLINE--TRNA LIGASE"/>
    <property type="match status" value="1"/>
</dbReference>
<dbReference type="Pfam" id="PF03129">
    <property type="entry name" value="HGTP_anticodon"/>
    <property type="match status" value="1"/>
</dbReference>
<dbReference type="Pfam" id="PF00587">
    <property type="entry name" value="tRNA-synt_2b"/>
    <property type="match status" value="1"/>
</dbReference>
<dbReference type="Pfam" id="PF04073">
    <property type="entry name" value="tRNA_edit"/>
    <property type="match status" value="1"/>
</dbReference>
<dbReference type="PRINTS" id="PR01046">
    <property type="entry name" value="TRNASYNTHPRO"/>
</dbReference>
<dbReference type="SUPFAM" id="SSF52954">
    <property type="entry name" value="Class II aaRS ABD-related"/>
    <property type="match status" value="1"/>
</dbReference>
<dbReference type="SUPFAM" id="SSF55681">
    <property type="entry name" value="Class II aaRS and biotin synthetases"/>
    <property type="match status" value="1"/>
</dbReference>
<dbReference type="SUPFAM" id="SSF55826">
    <property type="entry name" value="YbaK/ProRS associated domain"/>
    <property type="match status" value="1"/>
</dbReference>
<dbReference type="PROSITE" id="PS50862">
    <property type="entry name" value="AA_TRNA_LIGASE_II"/>
    <property type="match status" value="1"/>
</dbReference>
<evidence type="ECO:0000255" key="1">
    <source>
        <dbReference type="HAMAP-Rule" id="MF_01569"/>
    </source>
</evidence>
<evidence type="ECO:0000305" key="2"/>
<sequence>MRLSQFHLHTTKETPADAELVSHRLMLRAGMIRKLASGLYTWSPLGLRVLRKVEAIVREEMNRAGAVEVLFPTIQPRELWDATGRWEKFGGQLLKIKDRKEQEFCYSPTAEEAAAEFARQEINSYKQLPLNFYQIQTKFRDEIRPRFGVMRAREFLMKDAYSFHLTDEDMAREYDNMRAAYTRIFTRLGLDFRAVQADSGAIGGDASQEFHVIADSGEDSLAFSTGSDYAANVEAASAAPPAPRAAASEAMQQVATPTQKTCEDVAQLLGIALQRTVKSVAVMTQAGFVLVLVRGDHAVNEIKLAKVPGLADYRLANESEIREHLGCEPGFLGPVNTARPVRVVADRDVAALADFVVGANVSGAHLVGVNWGRDLPEPETVADVRNVVEGERAADGGELRLARGIEVGHVFQLGSQYAQALQATVIDEGGKAAVMKMGCYGIGISRIVAAAIEQNHDDAGIIWPAPMAPWQVVVCVINPKQDPQVLAAAQALLDQLLAAGLDAALDDRGLRPGAMFADMELLGIPHRVVVSERGLAAGTFEYRARTADAAESLDKAGLFSRLGH</sequence>
<feature type="chain" id="PRO_0000248815" description="Proline--tRNA ligase">
    <location>
        <begin position="1"/>
        <end position="564"/>
    </location>
</feature>
<comment type="function">
    <text evidence="1">Catalyzes the attachment of proline to tRNA(Pro) in a two-step reaction: proline is first activated by ATP to form Pro-AMP and then transferred to the acceptor end of tRNA(Pro). As ProRS can inadvertently accommodate and process non-cognate amino acids such as alanine and cysteine, to avoid such errors it has two additional distinct editing activities against alanine. One activity is designated as 'pretransfer' editing and involves the tRNA(Pro)-independent hydrolysis of activated Ala-AMP. The other activity is designated 'posttransfer' editing and involves deacylation of mischarged Ala-tRNA(Pro). The misacylated Cys-tRNA(Pro) is not edited by ProRS.</text>
</comment>
<comment type="catalytic activity">
    <reaction evidence="1">
        <text>tRNA(Pro) + L-proline + ATP = L-prolyl-tRNA(Pro) + AMP + diphosphate</text>
        <dbReference type="Rhea" id="RHEA:14305"/>
        <dbReference type="Rhea" id="RHEA-COMP:9700"/>
        <dbReference type="Rhea" id="RHEA-COMP:9702"/>
        <dbReference type="ChEBI" id="CHEBI:30616"/>
        <dbReference type="ChEBI" id="CHEBI:33019"/>
        <dbReference type="ChEBI" id="CHEBI:60039"/>
        <dbReference type="ChEBI" id="CHEBI:78442"/>
        <dbReference type="ChEBI" id="CHEBI:78532"/>
        <dbReference type="ChEBI" id="CHEBI:456215"/>
        <dbReference type="EC" id="6.1.1.15"/>
    </reaction>
</comment>
<comment type="subunit">
    <text evidence="1">Homodimer.</text>
</comment>
<comment type="subcellular location">
    <subcellularLocation>
        <location evidence="1">Cytoplasm</location>
    </subcellularLocation>
</comment>
<comment type="domain">
    <text evidence="1">Consists of three domains: the N-terminal catalytic domain, the editing domain and the C-terminal anticodon-binding domain.</text>
</comment>
<comment type="similarity">
    <text evidence="1">Belongs to the class-II aminoacyl-tRNA synthetase family. ProS type 1 subfamily.</text>
</comment>
<comment type="sequence caution" evidence="2">
    <conflict type="erroneous initiation">
        <sequence resource="EMBL-CDS" id="AAM38410"/>
    </conflict>
</comment>
<accession>Q8PGP9</accession>
<protein>
    <recommendedName>
        <fullName evidence="1">Proline--tRNA ligase</fullName>
        <ecNumber evidence="1">6.1.1.15</ecNumber>
    </recommendedName>
    <alternativeName>
        <fullName evidence="1">Prolyl-tRNA synthetase</fullName>
        <shortName evidence="1">ProRS</shortName>
    </alternativeName>
</protein>
<reference key="1">
    <citation type="journal article" date="2002" name="Nature">
        <title>Comparison of the genomes of two Xanthomonas pathogens with differing host specificities.</title>
        <authorList>
            <person name="da Silva A.C.R."/>
            <person name="Ferro J.A."/>
            <person name="Reinach F.C."/>
            <person name="Farah C.S."/>
            <person name="Furlan L.R."/>
            <person name="Quaggio R.B."/>
            <person name="Monteiro-Vitorello C.B."/>
            <person name="Van Sluys M.A."/>
            <person name="Almeida N.F. Jr."/>
            <person name="Alves L.M.C."/>
            <person name="do Amaral A.M."/>
            <person name="Bertolini M.C."/>
            <person name="Camargo L.E.A."/>
            <person name="Camarotte G."/>
            <person name="Cannavan F."/>
            <person name="Cardozo J."/>
            <person name="Chambergo F."/>
            <person name="Ciapina L.P."/>
            <person name="Cicarelli R.M.B."/>
            <person name="Coutinho L.L."/>
            <person name="Cursino-Santos J.R."/>
            <person name="El-Dorry H."/>
            <person name="Faria J.B."/>
            <person name="Ferreira A.J.S."/>
            <person name="Ferreira R.C.C."/>
            <person name="Ferro M.I.T."/>
            <person name="Formighieri E.F."/>
            <person name="Franco M.C."/>
            <person name="Greggio C.C."/>
            <person name="Gruber A."/>
            <person name="Katsuyama A.M."/>
            <person name="Kishi L.T."/>
            <person name="Leite R.P."/>
            <person name="Lemos E.G.M."/>
            <person name="Lemos M.V.F."/>
            <person name="Locali E.C."/>
            <person name="Machado M.A."/>
            <person name="Madeira A.M.B.N."/>
            <person name="Martinez-Rossi N.M."/>
            <person name="Martins E.C."/>
            <person name="Meidanis J."/>
            <person name="Menck C.F.M."/>
            <person name="Miyaki C.Y."/>
            <person name="Moon D.H."/>
            <person name="Moreira L.M."/>
            <person name="Novo M.T.M."/>
            <person name="Okura V.K."/>
            <person name="Oliveira M.C."/>
            <person name="Oliveira V.R."/>
            <person name="Pereira H.A."/>
            <person name="Rossi A."/>
            <person name="Sena J.A.D."/>
            <person name="Silva C."/>
            <person name="de Souza R.F."/>
            <person name="Spinola L.A.F."/>
            <person name="Takita M.A."/>
            <person name="Tamura R.E."/>
            <person name="Teixeira E.C."/>
            <person name="Tezza R.I.D."/>
            <person name="Trindade dos Santos M."/>
            <person name="Truffi D."/>
            <person name="Tsai S.M."/>
            <person name="White F.F."/>
            <person name="Setubal J.C."/>
            <person name="Kitajima J.P."/>
        </authorList>
    </citation>
    <scope>NUCLEOTIDE SEQUENCE [LARGE SCALE GENOMIC DNA]</scope>
    <source>
        <strain>306</strain>
    </source>
</reference>
<keyword id="KW-0030">Aminoacyl-tRNA synthetase</keyword>
<keyword id="KW-0067">ATP-binding</keyword>
<keyword id="KW-0963">Cytoplasm</keyword>
<keyword id="KW-0436">Ligase</keyword>
<keyword id="KW-0547">Nucleotide-binding</keyword>
<keyword id="KW-0648">Protein biosynthesis</keyword>
<proteinExistence type="inferred from homology"/>
<organism>
    <name type="scientific">Xanthomonas axonopodis pv. citri (strain 306)</name>
    <dbReference type="NCBI Taxonomy" id="190486"/>
    <lineage>
        <taxon>Bacteria</taxon>
        <taxon>Pseudomonadati</taxon>
        <taxon>Pseudomonadota</taxon>
        <taxon>Gammaproteobacteria</taxon>
        <taxon>Lysobacterales</taxon>
        <taxon>Lysobacteraceae</taxon>
        <taxon>Xanthomonas</taxon>
    </lineage>
</organism>
<gene>
    <name evidence="1" type="primary">proS</name>
    <name type="ordered locus">XAC3567</name>
</gene>